<name>YGIB_SALPC</name>
<sequence>MKRTKSIHHASFRKSWSARHLTPVALAVTAVFMLAGCEKSDETVSLYQNADDCSAANPGKSAECTTAYNNALKEAERTAPKYATREDCVAEFGEGQCQQAPAQAGMAPENQAQAQQSSGSFWMPLMAGYMMGRLMGGGAGFAQQPLFSSKNPASPAYGKYTDAAGKNYGAAQPGRTMTVPKTAMAPKPATTTTVTRGGFGESVAKQSTMQRSAAGTSTRSMGG</sequence>
<dbReference type="EMBL" id="CP000857">
    <property type="protein sequence ID" value="ACN47346.1"/>
    <property type="molecule type" value="Genomic_DNA"/>
</dbReference>
<dbReference type="RefSeq" id="WP_000831528.1">
    <property type="nucleotide sequence ID" value="NC_012125.1"/>
</dbReference>
<dbReference type="KEGG" id="sei:SPC_3261"/>
<dbReference type="HOGENOM" id="CLU_095624_0_0_6"/>
<dbReference type="Proteomes" id="UP000001599">
    <property type="component" value="Chromosome"/>
</dbReference>
<dbReference type="HAMAP" id="MF_01188">
    <property type="entry name" value="UPF0441"/>
    <property type="match status" value="1"/>
</dbReference>
<dbReference type="InterPro" id="IPR009576">
    <property type="entry name" value="Biofilm_formation_YgiB"/>
</dbReference>
<dbReference type="NCBIfam" id="NF008655">
    <property type="entry name" value="PRK11653.1"/>
    <property type="match status" value="1"/>
</dbReference>
<dbReference type="Pfam" id="PF06693">
    <property type="entry name" value="DUF1190"/>
    <property type="match status" value="1"/>
</dbReference>
<accession>C0PYV8</accession>
<protein>
    <recommendedName>
        <fullName evidence="1">UPF0441 protein YgiB</fullName>
    </recommendedName>
</protein>
<proteinExistence type="inferred from homology"/>
<evidence type="ECO:0000255" key="1">
    <source>
        <dbReference type="HAMAP-Rule" id="MF_01188"/>
    </source>
</evidence>
<evidence type="ECO:0000256" key="2">
    <source>
        <dbReference type="SAM" id="MobiDB-lite"/>
    </source>
</evidence>
<organism>
    <name type="scientific">Salmonella paratyphi C (strain RKS4594)</name>
    <dbReference type="NCBI Taxonomy" id="476213"/>
    <lineage>
        <taxon>Bacteria</taxon>
        <taxon>Pseudomonadati</taxon>
        <taxon>Pseudomonadota</taxon>
        <taxon>Gammaproteobacteria</taxon>
        <taxon>Enterobacterales</taxon>
        <taxon>Enterobacteriaceae</taxon>
        <taxon>Salmonella</taxon>
    </lineage>
</organism>
<feature type="chain" id="PRO_1000164495" description="UPF0441 protein YgiB">
    <location>
        <begin position="1"/>
        <end position="223"/>
    </location>
</feature>
<feature type="region of interest" description="Disordered" evidence="2">
    <location>
        <begin position="178"/>
        <end position="223"/>
    </location>
</feature>
<feature type="compositionally biased region" description="Low complexity" evidence="2">
    <location>
        <begin position="178"/>
        <end position="195"/>
    </location>
</feature>
<feature type="compositionally biased region" description="Polar residues" evidence="2">
    <location>
        <begin position="204"/>
        <end position="223"/>
    </location>
</feature>
<comment type="similarity">
    <text evidence="1">Belongs to the UPF0441 family.</text>
</comment>
<gene>
    <name evidence="1" type="primary">ygiB</name>
    <name type="ordered locus">SPC_3261</name>
</gene>
<reference key="1">
    <citation type="journal article" date="2009" name="PLoS ONE">
        <title>Salmonella paratyphi C: genetic divergence from Salmonella choleraesuis and pathogenic convergence with Salmonella typhi.</title>
        <authorList>
            <person name="Liu W.-Q."/>
            <person name="Feng Y."/>
            <person name="Wang Y."/>
            <person name="Zou Q.-H."/>
            <person name="Chen F."/>
            <person name="Guo J.-T."/>
            <person name="Peng Y.-H."/>
            <person name="Jin Y."/>
            <person name="Li Y.-G."/>
            <person name="Hu S.-N."/>
            <person name="Johnston R.N."/>
            <person name="Liu G.-R."/>
            <person name="Liu S.-L."/>
        </authorList>
    </citation>
    <scope>NUCLEOTIDE SEQUENCE [LARGE SCALE GENOMIC DNA]</scope>
    <source>
        <strain>RKS4594</strain>
    </source>
</reference>